<keyword id="KW-0963">Cytoplasm</keyword>
<keyword id="KW-0704">Schiff base</keyword>
<keyword id="KW-0784">Thiamine biosynthesis</keyword>
<keyword id="KW-0808">Transferase</keyword>
<evidence type="ECO:0000255" key="1">
    <source>
        <dbReference type="HAMAP-Rule" id="MF_00443"/>
    </source>
</evidence>
<organism>
    <name type="scientific">Aliivibrio fischeri (strain MJ11)</name>
    <name type="common">Vibrio fischeri</name>
    <dbReference type="NCBI Taxonomy" id="388396"/>
    <lineage>
        <taxon>Bacteria</taxon>
        <taxon>Pseudomonadati</taxon>
        <taxon>Pseudomonadota</taxon>
        <taxon>Gammaproteobacteria</taxon>
        <taxon>Vibrionales</taxon>
        <taxon>Vibrionaceae</taxon>
        <taxon>Aliivibrio</taxon>
    </lineage>
</organism>
<reference key="1">
    <citation type="submission" date="2008-08" db="EMBL/GenBank/DDBJ databases">
        <title>Complete sequence of Vibrio fischeri strain MJ11.</title>
        <authorList>
            <person name="Mandel M.J."/>
            <person name="Stabb E.V."/>
            <person name="Ruby E.G."/>
            <person name="Ferriera S."/>
            <person name="Johnson J."/>
            <person name="Kravitz S."/>
            <person name="Beeson K."/>
            <person name="Sutton G."/>
            <person name="Rogers Y.-H."/>
            <person name="Friedman R."/>
            <person name="Frazier M."/>
            <person name="Venter J.C."/>
        </authorList>
    </citation>
    <scope>NUCLEOTIDE SEQUENCE [LARGE SCALE GENOMIC DNA]</scope>
    <source>
        <strain>MJ11</strain>
    </source>
</reference>
<protein>
    <recommendedName>
        <fullName evidence="1">Thiazole synthase</fullName>
        <ecNumber evidence="1">2.8.1.10</ecNumber>
    </recommendedName>
</protein>
<dbReference type="EC" id="2.8.1.10" evidence="1"/>
<dbReference type="EMBL" id="CP001139">
    <property type="protein sequence ID" value="ACH65114.1"/>
    <property type="molecule type" value="Genomic_DNA"/>
</dbReference>
<dbReference type="RefSeq" id="WP_012532831.1">
    <property type="nucleotide sequence ID" value="NC_011184.1"/>
</dbReference>
<dbReference type="SMR" id="B5FF70"/>
<dbReference type="KEGG" id="vfm:VFMJ11_0037"/>
<dbReference type="HOGENOM" id="CLU_062233_1_0_6"/>
<dbReference type="UniPathway" id="UPA00060"/>
<dbReference type="Proteomes" id="UP000001857">
    <property type="component" value="Chromosome I"/>
</dbReference>
<dbReference type="GO" id="GO:0005737">
    <property type="term" value="C:cytoplasm"/>
    <property type="evidence" value="ECO:0007669"/>
    <property type="project" value="UniProtKB-SubCell"/>
</dbReference>
<dbReference type="GO" id="GO:1990107">
    <property type="term" value="F:thiazole synthase activity"/>
    <property type="evidence" value="ECO:0007669"/>
    <property type="project" value="UniProtKB-EC"/>
</dbReference>
<dbReference type="GO" id="GO:0009229">
    <property type="term" value="P:thiamine diphosphate biosynthetic process"/>
    <property type="evidence" value="ECO:0007669"/>
    <property type="project" value="UniProtKB-UniRule"/>
</dbReference>
<dbReference type="CDD" id="cd04728">
    <property type="entry name" value="ThiG"/>
    <property type="match status" value="1"/>
</dbReference>
<dbReference type="FunFam" id="3.20.20.70:FF:000049">
    <property type="entry name" value="Thiazole synthase"/>
    <property type="match status" value="1"/>
</dbReference>
<dbReference type="Gene3D" id="3.20.20.70">
    <property type="entry name" value="Aldolase class I"/>
    <property type="match status" value="1"/>
</dbReference>
<dbReference type="HAMAP" id="MF_00443">
    <property type="entry name" value="ThiG"/>
    <property type="match status" value="1"/>
</dbReference>
<dbReference type="InterPro" id="IPR013785">
    <property type="entry name" value="Aldolase_TIM"/>
</dbReference>
<dbReference type="InterPro" id="IPR033983">
    <property type="entry name" value="Thiazole_synthase_ThiG"/>
</dbReference>
<dbReference type="InterPro" id="IPR008867">
    <property type="entry name" value="ThiG"/>
</dbReference>
<dbReference type="PANTHER" id="PTHR34266">
    <property type="entry name" value="THIAZOLE SYNTHASE"/>
    <property type="match status" value="1"/>
</dbReference>
<dbReference type="PANTHER" id="PTHR34266:SF2">
    <property type="entry name" value="THIAZOLE SYNTHASE"/>
    <property type="match status" value="1"/>
</dbReference>
<dbReference type="Pfam" id="PF05690">
    <property type="entry name" value="ThiG"/>
    <property type="match status" value="1"/>
</dbReference>
<dbReference type="SUPFAM" id="SSF110399">
    <property type="entry name" value="ThiG-like"/>
    <property type="match status" value="1"/>
</dbReference>
<feature type="chain" id="PRO_1000196912" description="Thiazole synthase">
    <location>
        <begin position="1"/>
        <end position="256"/>
    </location>
</feature>
<feature type="active site" description="Schiff-base intermediate with DXP" evidence="1">
    <location>
        <position position="98"/>
    </location>
</feature>
<feature type="binding site" evidence="1">
    <location>
        <position position="159"/>
    </location>
    <ligand>
        <name>1-deoxy-D-xylulose 5-phosphate</name>
        <dbReference type="ChEBI" id="CHEBI:57792"/>
    </ligand>
</feature>
<feature type="binding site" evidence="1">
    <location>
        <begin position="185"/>
        <end position="186"/>
    </location>
    <ligand>
        <name>1-deoxy-D-xylulose 5-phosphate</name>
        <dbReference type="ChEBI" id="CHEBI:57792"/>
    </ligand>
</feature>
<feature type="binding site" evidence="1">
    <location>
        <begin position="207"/>
        <end position="208"/>
    </location>
    <ligand>
        <name>1-deoxy-D-xylulose 5-phosphate</name>
        <dbReference type="ChEBI" id="CHEBI:57792"/>
    </ligand>
</feature>
<gene>
    <name evidence="1" type="primary">thiG</name>
    <name type="ordered locus">VFMJ11_0037</name>
</gene>
<name>THIG_ALIFM</name>
<sequence length="256" mass="27038">MNDLLTIGDKTFRSRLFTGTGKFPNASVMQKALIESGSELSTMALKRVEVNNPEDNILKPIVDAGINLLPNTSGAKNAREAIFAAQLAREALGTNWLKLEIHPDPKYLMPDPIETLTAAEELVKQGFIVLPYCHADPVLCKRLEEVGCAAVMPLGAPIGSNKGIVSRDFLEIIIDQARVPVVVDAGIGAPSHAALAMELGADAVLVNTAIAAARNPIAMATAFKLAVQSGRLAYENGLAAVNTQAVASSPLTAFLD</sequence>
<comment type="function">
    <text evidence="1">Catalyzes the rearrangement of 1-deoxy-D-xylulose 5-phosphate (DXP) to produce the thiazole phosphate moiety of thiamine. Sulfur is provided by the thiocarboxylate moiety of the carrier protein ThiS. In vitro, sulfur can be provided by H(2)S.</text>
</comment>
<comment type="catalytic activity">
    <reaction evidence="1">
        <text>[ThiS sulfur-carrier protein]-C-terminal-Gly-aminoethanethioate + 2-iminoacetate + 1-deoxy-D-xylulose 5-phosphate = [ThiS sulfur-carrier protein]-C-terminal Gly-Gly + 2-[(2R,5Z)-2-carboxy-4-methylthiazol-5(2H)-ylidene]ethyl phosphate + 2 H2O + H(+)</text>
        <dbReference type="Rhea" id="RHEA:26297"/>
        <dbReference type="Rhea" id="RHEA-COMP:12909"/>
        <dbReference type="Rhea" id="RHEA-COMP:19908"/>
        <dbReference type="ChEBI" id="CHEBI:15377"/>
        <dbReference type="ChEBI" id="CHEBI:15378"/>
        <dbReference type="ChEBI" id="CHEBI:57792"/>
        <dbReference type="ChEBI" id="CHEBI:62899"/>
        <dbReference type="ChEBI" id="CHEBI:77846"/>
        <dbReference type="ChEBI" id="CHEBI:90778"/>
        <dbReference type="ChEBI" id="CHEBI:232372"/>
        <dbReference type="EC" id="2.8.1.10"/>
    </reaction>
</comment>
<comment type="pathway">
    <text evidence="1">Cofactor biosynthesis; thiamine diphosphate biosynthesis.</text>
</comment>
<comment type="subunit">
    <text evidence="1">Homotetramer. Forms heterodimers with either ThiH or ThiS.</text>
</comment>
<comment type="subcellular location">
    <subcellularLocation>
        <location evidence="1">Cytoplasm</location>
    </subcellularLocation>
</comment>
<comment type="similarity">
    <text evidence="1">Belongs to the ThiG family.</text>
</comment>
<accession>B5FF70</accession>
<proteinExistence type="inferred from homology"/>